<dbReference type="EC" id="2.3.1.275" evidence="1"/>
<dbReference type="EMBL" id="CP000393">
    <property type="protein sequence ID" value="ABG52198.1"/>
    <property type="molecule type" value="Genomic_DNA"/>
</dbReference>
<dbReference type="RefSeq" id="WP_011612551.1">
    <property type="nucleotide sequence ID" value="NC_008312.1"/>
</dbReference>
<dbReference type="SMR" id="Q10ZX6"/>
<dbReference type="STRING" id="203124.Tery_3050"/>
<dbReference type="KEGG" id="ter:Tery_3050"/>
<dbReference type="eggNOG" id="COG0344">
    <property type="taxonomic scope" value="Bacteria"/>
</dbReference>
<dbReference type="HOGENOM" id="CLU_081254_7_1_3"/>
<dbReference type="OrthoDB" id="9777124at2"/>
<dbReference type="UniPathway" id="UPA00085"/>
<dbReference type="GO" id="GO:0005886">
    <property type="term" value="C:plasma membrane"/>
    <property type="evidence" value="ECO:0007669"/>
    <property type="project" value="UniProtKB-SubCell"/>
</dbReference>
<dbReference type="GO" id="GO:0043772">
    <property type="term" value="F:acyl-phosphate glycerol-3-phosphate acyltransferase activity"/>
    <property type="evidence" value="ECO:0007669"/>
    <property type="project" value="UniProtKB-UniRule"/>
</dbReference>
<dbReference type="GO" id="GO:0008654">
    <property type="term" value="P:phospholipid biosynthetic process"/>
    <property type="evidence" value="ECO:0007669"/>
    <property type="project" value="UniProtKB-UniRule"/>
</dbReference>
<dbReference type="HAMAP" id="MF_01043">
    <property type="entry name" value="PlsY"/>
    <property type="match status" value="1"/>
</dbReference>
<dbReference type="InterPro" id="IPR003811">
    <property type="entry name" value="G3P_acylTferase_PlsY"/>
</dbReference>
<dbReference type="NCBIfam" id="TIGR00023">
    <property type="entry name" value="glycerol-3-phosphate 1-O-acyltransferase PlsY"/>
    <property type="match status" value="1"/>
</dbReference>
<dbReference type="PANTHER" id="PTHR30309:SF0">
    <property type="entry name" value="GLYCEROL-3-PHOSPHATE ACYLTRANSFERASE-RELATED"/>
    <property type="match status" value="1"/>
</dbReference>
<dbReference type="PANTHER" id="PTHR30309">
    <property type="entry name" value="INNER MEMBRANE PROTEIN YGIH"/>
    <property type="match status" value="1"/>
</dbReference>
<dbReference type="Pfam" id="PF02660">
    <property type="entry name" value="G3P_acyltransf"/>
    <property type="match status" value="1"/>
</dbReference>
<dbReference type="SMART" id="SM01207">
    <property type="entry name" value="G3P_acyltransf"/>
    <property type="match status" value="1"/>
</dbReference>
<protein>
    <recommendedName>
        <fullName evidence="1">Glycerol-3-phosphate acyltransferase</fullName>
    </recommendedName>
    <alternativeName>
        <fullName evidence="1">Acyl-PO4 G3P acyltransferase</fullName>
    </alternativeName>
    <alternativeName>
        <fullName evidence="1">Acyl-phosphate--glycerol-3-phosphate acyltransferase</fullName>
    </alternativeName>
    <alternativeName>
        <fullName evidence="1">G3P acyltransferase</fullName>
        <shortName evidence="1">GPAT</shortName>
        <ecNumber evidence="1">2.3.1.275</ecNumber>
    </alternativeName>
    <alternativeName>
        <fullName evidence="1">Lysophosphatidic acid synthase</fullName>
        <shortName evidence="1">LPA synthase</shortName>
    </alternativeName>
</protein>
<reference key="1">
    <citation type="journal article" date="2015" name="Proc. Natl. Acad. Sci. U.S.A.">
        <title>Trichodesmium genome maintains abundant, widespread noncoding DNA in situ, despite oligotrophic lifestyle.</title>
        <authorList>
            <person name="Walworth N."/>
            <person name="Pfreundt U."/>
            <person name="Nelson W.C."/>
            <person name="Mincer T."/>
            <person name="Heidelberg J.F."/>
            <person name="Fu F."/>
            <person name="Waterbury J.B."/>
            <person name="Glavina del Rio T."/>
            <person name="Goodwin L."/>
            <person name="Kyrpides N.C."/>
            <person name="Land M.L."/>
            <person name="Woyke T."/>
            <person name="Hutchins D.A."/>
            <person name="Hess W.R."/>
            <person name="Webb E.A."/>
        </authorList>
    </citation>
    <scope>NUCLEOTIDE SEQUENCE [LARGE SCALE GENOMIC DNA]</scope>
    <source>
        <strain>IMS101</strain>
    </source>
</reference>
<gene>
    <name evidence="1" type="primary">plsY</name>
    <name type="ordered locus">Tery_3050</name>
</gene>
<feature type="chain" id="PRO_1000064238" description="Glycerol-3-phosphate acyltransferase">
    <location>
        <begin position="1"/>
        <end position="228"/>
    </location>
</feature>
<feature type="transmembrane region" description="Helical" evidence="1">
    <location>
        <begin position="1"/>
        <end position="21"/>
    </location>
</feature>
<feature type="transmembrane region" description="Helical" evidence="1">
    <location>
        <begin position="56"/>
        <end position="76"/>
    </location>
</feature>
<feature type="transmembrane region" description="Helical" evidence="1">
    <location>
        <begin position="104"/>
        <end position="124"/>
    </location>
</feature>
<feature type="transmembrane region" description="Helical" evidence="1">
    <location>
        <begin position="136"/>
        <end position="156"/>
    </location>
</feature>
<feature type="transmembrane region" description="Helical" evidence="1">
    <location>
        <begin position="161"/>
        <end position="181"/>
    </location>
</feature>
<feature type="transmembrane region" description="Helical" evidence="1">
    <location>
        <begin position="183"/>
        <end position="203"/>
    </location>
</feature>
<comment type="function">
    <text evidence="1">Catalyzes the transfer of an acyl group from acyl-phosphate (acyl-PO(4)) to glycerol-3-phosphate (G3P) to form lysophosphatidic acid (LPA). This enzyme utilizes acyl-phosphate as fatty acyl donor, but not acyl-CoA or acyl-ACP.</text>
</comment>
<comment type="catalytic activity">
    <reaction evidence="1">
        <text>an acyl phosphate + sn-glycerol 3-phosphate = a 1-acyl-sn-glycero-3-phosphate + phosphate</text>
        <dbReference type="Rhea" id="RHEA:34075"/>
        <dbReference type="ChEBI" id="CHEBI:43474"/>
        <dbReference type="ChEBI" id="CHEBI:57597"/>
        <dbReference type="ChEBI" id="CHEBI:57970"/>
        <dbReference type="ChEBI" id="CHEBI:59918"/>
        <dbReference type="EC" id="2.3.1.275"/>
    </reaction>
</comment>
<comment type="pathway">
    <text evidence="1">Lipid metabolism; phospholipid metabolism.</text>
</comment>
<comment type="subunit">
    <text evidence="1">Probably interacts with PlsX.</text>
</comment>
<comment type="subcellular location">
    <subcellularLocation>
        <location evidence="1">Cell inner membrane</location>
        <topology evidence="1">Multi-pass membrane protein</topology>
    </subcellularLocation>
</comment>
<comment type="similarity">
    <text evidence="1">Belongs to the PlsY family.</text>
</comment>
<accession>Q10ZX6</accession>
<proteinExistence type="inferred from homology"/>
<evidence type="ECO:0000255" key="1">
    <source>
        <dbReference type="HAMAP-Rule" id="MF_01043"/>
    </source>
</evidence>
<name>PLSY_TRIEI</name>
<organism>
    <name type="scientific">Trichodesmium erythraeum (strain IMS101)</name>
    <dbReference type="NCBI Taxonomy" id="203124"/>
    <lineage>
        <taxon>Bacteria</taxon>
        <taxon>Bacillati</taxon>
        <taxon>Cyanobacteriota</taxon>
        <taxon>Cyanophyceae</taxon>
        <taxon>Oscillatoriophycideae</taxon>
        <taxon>Oscillatoriales</taxon>
        <taxon>Microcoleaceae</taxon>
        <taxon>Trichodesmium</taxon>
    </lineage>
</organism>
<sequence length="228" mass="24537">MINWLVLNAVILIVAYLLGATPSGYWIGSWFYGVDIREQGSGSTGATNVLRTLGNVPALVVLVIDIFKGALAIALVRYIYSLVFAQNLTIIAGVTDIDTAKEWMVIIAGLIAIVGHTKSIWIGFKGGKSVASSLGILLAISWVVGLGTLSVFIVVLTISRIVSLSSIIAAISVSGLMFFTGQPLPYQIFAITGGIYVIWRHISNIERLLACKEPRIGQKLSTEQKMNK</sequence>
<keyword id="KW-0997">Cell inner membrane</keyword>
<keyword id="KW-1003">Cell membrane</keyword>
<keyword id="KW-0444">Lipid biosynthesis</keyword>
<keyword id="KW-0443">Lipid metabolism</keyword>
<keyword id="KW-0472">Membrane</keyword>
<keyword id="KW-0594">Phospholipid biosynthesis</keyword>
<keyword id="KW-1208">Phospholipid metabolism</keyword>
<keyword id="KW-0808">Transferase</keyword>
<keyword id="KW-0812">Transmembrane</keyword>
<keyword id="KW-1133">Transmembrane helix</keyword>